<organism>
    <name type="scientific">Homo sapiens</name>
    <name type="common">Human</name>
    <dbReference type="NCBI Taxonomy" id="9606"/>
    <lineage>
        <taxon>Eukaryota</taxon>
        <taxon>Metazoa</taxon>
        <taxon>Chordata</taxon>
        <taxon>Craniata</taxon>
        <taxon>Vertebrata</taxon>
        <taxon>Euteleostomi</taxon>
        <taxon>Mammalia</taxon>
        <taxon>Eutheria</taxon>
        <taxon>Euarchontoglires</taxon>
        <taxon>Primates</taxon>
        <taxon>Haplorrhini</taxon>
        <taxon>Catarrhini</taxon>
        <taxon>Hominidae</taxon>
        <taxon>Homo</taxon>
    </lineage>
</organism>
<evidence type="ECO:0000250" key="1"/>
<evidence type="ECO:0000255" key="2">
    <source>
        <dbReference type="PROSITE-ProRule" id="PRU00042"/>
    </source>
</evidence>
<evidence type="ECO:0000255" key="3">
    <source>
        <dbReference type="PROSITE-ProRule" id="PRU00119"/>
    </source>
</evidence>
<evidence type="ECO:0000256" key="4">
    <source>
        <dbReference type="SAM" id="MobiDB-lite"/>
    </source>
</evidence>
<evidence type="ECO:0000305" key="5"/>
<name>ZN844_HUMAN</name>
<keyword id="KW-0238">DNA-binding</keyword>
<keyword id="KW-0479">Metal-binding</keyword>
<keyword id="KW-0539">Nucleus</keyword>
<keyword id="KW-1267">Proteomics identification</keyword>
<keyword id="KW-1185">Reference proteome</keyword>
<keyword id="KW-0677">Repeat</keyword>
<keyword id="KW-0804">Transcription</keyword>
<keyword id="KW-0805">Transcription regulation</keyword>
<keyword id="KW-0862">Zinc</keyword>
<keyword id="KW-0863">Zinc-finger</keyword>
<proteinExistence type="evidence at protein level"/>
<sequence>MDLVAFEDVAVNFTQEEWSLLDPSQKNLYREVMQETLRNLASIGEKWKDQNIEDQYKNPRNNLRSLLGERVDENTEENHCGETSSQIPDDTLNKKTSPGVKSCESSVCGEVFVGHSSLNRHIRADTAHKPSEYQEYGQEPYKCQQRKKAFRCHPSFQMQEKAHTGEKLYDCKECGKTFISHSSIQRHMIMHNGDGTYKCKFCGKACPCLSIYLIHERVHTGEKPYKCKQCGKAFSYSTSLQIHERTHTGEKPYECKECGKAFGSPNSLYEHRRTHTGEKPYECKQCGKAFRWFHSFQIHERTHSEEKAYECTKCGKAFKCPSYLCRHEVTHSGKKPCECKQCGKALSYLNFQRHMKMHTRMRPYKCKTVEKPLILPVRFEDMKELTLERNLMNASTVVKPSIVPVPFTIMKGLTLERNPMNVSSVVKPSFLPLPFDIMKGLTLERNRMSVSNVGKPSDLPHTFKCMEGLTLKRNPMNVSSVVKPSFFPLPFDIMKGLTLERNPMSVSNVGKPSHLPHTFKCMKGLTLESNCMNLNNVKKPLDLSETFKFMKRHTLERNPIRNMEKHSTISLPFKYMQQCTEDRMPMNVKSVTKHSYLPRSFEYMQEHTLERNPMNVRNAEKRSIIFLLCVYTKGCTLERNHINVRIVGKHSVCLVPFVDIKGLTLE</sequence>
<reference key="1">
    <citation type="journal article" date="2004" name="Nat. Genet.">
        <title>Complete sequencing and characterization of 21,243 full-length human cDNAs.</title>
        <authorList>
            <person name="Ota T."/>
            <person name="Suzuki Y."/>
            <person name="Nishikawa T."/>
            <person name="Otsuki T."/>
            <person name="Sugiyama T."/>
            <person name="Irie R."/>
            <person name="Wakamatsu A."/>
            <person name="Hayashi K."/>
            <person name="Sato H."/>
            <person name="Nagai K."/>
            <person name="Kimura K."/>
            <person name="Makita H."/>
            <person name="Sekine M."/>
            <person name="Obayashi M."/>
            <person name="Nishi T."/>
            <person name="Shibahara T."/>
            <person name="Tanaka T."/>
            <person name="Ishii S."/>
            <person name="Yamamoto J."/>
            <person name="Saito K."/>
            <person name="Kawai Y."/>
            <person name="Isono Y."/>
            <person name="Nakamura Y."/>
            <person name="Nagahari K."/>
            <person name="Murakami K."/>
            <person name="Yasuda T."/>
            <person name="Iwayanagi T."/>
            <person name="Wagatsuma M."/>
            <person name="Shiratori A."/>
            <person name="Sudo H."/>
            <person name="Hosoiri T."/>
            <person name="Kaku Y."/>
            <person name="Kodaira H."/>
            <person name="Kondo H."/>
            <person name="Sugawara M."/>
            <person name="Takahashi M."/>
            <person name="Kanda K."/>
            <person name="Yokoi T."/>
            <person name="Furuya T."/>
            <person name="Kikkawa E."/>
            <person name="Omura Y."/>
            <person name="Abe K."/>
            <person name="Kamihara K."/>
            <person name="Katsuta N."/>
            <person name="Sato K."/>
            <person name="Tanikawa M."/>
            <person name="Yamazaki M."/>
            <person name="Ninomiya K."/>
            <person name="Ishibashi T."/>
            <person name="Yamashita H."/>
            <person name="Murakawa K."/>
            <person name="Fujimori K."/>
            <person name="Tanai H."/>
            <person name="Kimata M."/>
            <person name="Watanabe M."/>
            <person name="Hiraoka S."/>
            <person name="Chiba Y."/>
            <person name="Ishida S."/>
            <person name="Ono Y."/>
            <person name="Takiguchi S."/>
            <person name="Watanabe S."/>
            <person name="Yosida M."/>
            <person name="Hotuta T."/>
            <person name="Kusano J."/>
            <person name="Kanehori K."/>
            <person name="Takahashi-Fujii A."/>
            <person name="Hara H."/>
            <person name="Tanase T.-O."/>
            <person name="Nomura Y."/>
            <person name="Togiya S."/>
            <person name="Komai F."/>
            <person name="Hara R."/>
            <person name="Takeuchi K."/>
            <person name="Arita M."/>
            <person name="Imose N."/>
            <person name="Musashino K."/>
            <person name="Yuuki H."/>
            <person name="Oshima A."/>
            <person name="Sasaki N."/>
            <person name="Aotsuka S."/>
            <person name="Yoshikawa Y."/>
            <person name="Matsunawa H."/>
            <person name="Ichihara T."/>
            <person name="Shiohata N."/>
            <person name="Sano S."/>
            <person name="Moriya S."/>
            <person name="Momiyama H."/>
            <person name="Satoh N."/>
            <person name="Takami S."/>
            <person name="Terashima Y."/>
            <person name="Suzuki O."/>
            <person name="Nakagawa S."/>
            <person name="Senoh A."/>
            <person name="Mizoguchi H."/>
            <person name="Goto Y."/>
            <person name="Shimizu F."/>
            <person name="Wakebe H."/>
            <person name="Hishigaki H."/>
            <person name="Watanabe T."/>
            <person name="Sugiyama A."/>
            <person name="Takemoto M."/>
            <person name="Kawakami B."/>
            <person name="Yamazaki M."/>
            <person name="Watanabe K."/>
            <person name="Kumagai A."/>
            <person name="Itakura S."/>
            <person name="Fukuzumi Y."/>
            <person name="Fujimori Y."/>
            <person name="Komiyama M."/>
            <person name="Tashiro H."/>
            <person name="Tanigami A."/>
            <person name="Fujiwara T."/>
            <person name="Ono T."/>
            <person name="Yamada K."/>
            <person name="Fujii Y."/>
            <person name="Ozaki K."/>
            <person name="Hirao M."/>
            <person name="Ohmori Y."/>
            <person name="Kawabata A."/>
            <person name="Hikiji T."/>
            <person name="Kobatake N."/>
            <person name="Inagaki H."/>
            <person name="Ikema Y."/>
            <person name="Okamoto S."/>
            <person name="Okitani R."/>
            <person name="Kawakami T."/>
            <person name="Noguchi S."/>
            <person name="Itoh T."/>
            <person name="Shigeta K."/>
            <person name="Senba T."/>
            <person name="Matsumura K."/>
            <person name="Nakajima Y."/>
            <person name="Mizuno T."/>
            <person name="Morinaga M."/>
            <person name="Sasaki M."/>
            <person name="Togashi T."/>
            <person name="Oyama M."/>
            <person name="Hata H."/>
            <person name="Watanabe M."/>
            <person name="Komatsu T."/>
            <person name="Mizushima-Sugano J."/>
            <person name="Satoh T."/>
            <person name="Shirai Y."/>
            <person name="Takahashi Y."/>
            <person name="Nakagawa K."/>
            <person name="Okumura K."/>
            <person name="Nagase T."/>
            <person name="Nomura N."/>
            <person name="Kikuchi H."/>
            <person name="Masuho Y."/>
            <person name="Yamashita R."/>
            <person name="Nakai K."/>
            <person name="Yada T."/>
            <person name="Nakamura Y."/>
            <person name="Ohara O."/>
            <person name="Isogai T."/>
            <person name="Sugano S."/>
        </authorList>
    </citation>
    <scope>NUCLEOTIDE SEQUENCE [LARGE SCALE MRNA]</scope>
    <source>
        <tissue>Trachea</tissue>
    </source>
</reference>
<reference key="2">
    <citation type="journal article" date="2007" name="BMC Genomics">
        <title>The full-ORF clone resource of the German cDNA consortium.</title>
        <authorList>
            <person name="Bechtel S."/>
            <person name="Rosenfelder H."/>
            <person name="Duda A."/>
            <person name="Schmidt C.P."/>
            <person name="Ernst U."/>
            <person name="Wellenreuther R."/>
            <person name="Mehrle A."/>
            <person name="Schuster C."/>
            <person name="Bahr A."/>
            <person name="Bloecker H."/>
            <person name="Heubner D."/>
            <person name="Hoerlein A."/>
            <person name="Michel G."/>
            <person name="Wedler H."/>
            <person name="Koehrer K."/>
            <person name="Ottenwaelder B."/>
            <person name="Poustka A."/>
            <person name="Wiemann S."/>
            <person name="Schupp I."/>
        </authorList>
    </citation>
    <scope>NUCLEOTIDE SEQUENCE [LARGE SCALE MRNA]</scope>
    <source>
        <tissue>Lymph node</tissue>
    </source>
</reference>
<reference key="3">
    <citation type="submission" date="2005-07" db="EMBL/GenBank/DDBJ databases">
        <authorList>
            <person name="Mural R.J."/>
            <person name="Istrail S."/>
            <person name="Sutton G.G."/>
            <person name="Florea L."/>
            <person name="Halpern A.L."/>
            <person name="Mobarry C.M."/>
            <person name="Lippert R."/>
            <person name="Walenz B."/>
            <person name="Shatkay H."/>
            <person name="Dew I."/>
            <person name="Miller J.R."/>
            <person name="Flanigan M.J."/>
            <person name="Edwards N.J."/>
            <person name="Bolanos R."/>
            <person name="Fasulo D."/>
            <person name="Halldorsson B.V."/>
            <person name="Hannenhalli S."/>
            <person name="Turner R."/>
            <person name="Yooseph S."/>
            <person name="Lu F."/>
            <person name="Nusskern D.R."/>
            <person name="Shue B.C."/>
            <person name="Zheng X.H."/>
            <person name="Zhong F."/>
            <person name="Delcher A.L."/>
            <person name="Huson D.H."/>
            <person name="Kravitz S.A."/>
            <person name="Mouchard L."/>
            <person name="Reinert K."/>
            <person name="Remington K.A."/>
            <person name="Clark A.G."/>
            <person name="Waterman M.S."/>
            <person name="Eichler E.E."/>
            <person name="Adams M.D."/>
            <person name="Hunkapiller M.W."/>
            <person name="Myers E.W."/>
            <person name="Venter J.C."/>
        </authorList>
    </citation>
    <scope>NUCLEOTIDE SEQUENCE [LARGE SCALE GENOMIC DNA]</scope>
</reference>
<reference key="4">
    <citation type="journal article" date="2004" name="Genome Res.">
        <title>The status, quality, and expansion of the NIH full-length cDNA project: the Mammalian Gene Collection (MGC).</title>
        <authorList>
            <consortium name="The MGC Project Team"/>
        </authorList>
    </citation>
    <scope>NUCLEOTIDE SEQUENCE [LARGE SCALE MRNA]</scope>
</reference>
<dbReference type="EMBL" id="AK098117">
    <property type="protein sequence ID" value="BAG53579.1"/>
    <property type="molecule type" value="mRNA"/>
</dbReference>
<dbReference type="EMBL" id="AL832297">
    <property type="protein sequence ID" value="CAI46141.1"/>
    <property type="molecule type" value="mRNA"/>
</dbReference>
<dbReference type="EMBL" id="CH471106">
    <property type="protein sequence ID" value="EAW84257.1"/>
    <property type="molecule type" value="Genomic_DNA"/>
</dbReference>
<dbReference type="EMBL" id="BC125186">
    <property type="protein sequence ID" value="AAI25187.1"/>
    <property type="molecule type" value="mRNA"/>
</dbReference>
<dbReference type="CCDS" id="CCDS45985.1"/>
<dbReference type="RefSeq" id="NP_001129973.1">
    <property type="nucleotide sequence ID" value="NM_001136501.3"/>
</dbReference>
<dbReference type="SMR" id="Q08AG5"/>
<dbReference type="BioGRID" id="129858">
    <property type="interactions" value="13"/>
</dbReference>
<dbReference type="FunCoup" id="Q08AG5">
    <property type="interactions" value="647"/>
</dbReference>
<dbReference type="IntAct" id="Q08AG5">
    <property type="interactions" value="12"/>
</dbReference>
<dbReference type="STRING" id="9606.ENSP00000392024"/>
<dbReference type="GlyGen" id="Q08AG5">
    <property type="glycosylation" value="2 sites, 1 N-linked glycan (1 site), 1 O-linked glycan (1 site)"/>
</dbReference>
<dbReference type="iPTMnet" id="Q08AG5"/>
<dbReference type="PhosphoSitePlus" id="Q08AG5"/>
<dbReference type="BioMuta" id="ZNF844"/>
<dbReference type="DMDM" id="121939996"/>
<dbReference type="jPOST" id="Q08AG5"/>
<dbReference type="MassIVE" id="Q08AG5"/>
<dbReference type="PaxDb" id="9606-ENSP00000392024"/>
<dbReference type="PeptideAtlas" id="Q08AG5"/>
<dbReference type="Antibodypedia" id="49319">
    <property type="antibodies" value="33 antibodies from 10 providers"/>
</dbReference>
<dbReference type="DNASU" id="284391"/>
<dbReference type="Ensembl" id="ENST00000439326.8">
    <property type="protein sequence ID" value="ENSP00000392024.3"/>
    <property type="gene ID" value="ENSG00000223547.10"/>
</dbReference>
<dbReference type="GeneID" id="284391"/>
<dbReference type="KEGG" id="hsa:284391"/>
<dbReference type="MANE-Select" id="ENST00000439326.8">
    <property type="protein sequence ID" value="ENSP00000392024.3"/>
    <property type="RefSeq nucleotide sequence ID" value="NM_001136501.3"/>
    <property type="RefSeq protein sequence ID" value="NP_001129973.1"/>
</dbReference>
<dbReference type="UCSC" id="uc002mtb.3">
    <property type="organism name" value="human"/>
</dbReference>
<dbReference type="AGR" id="HGNC:25932"/>
<dbReference type="CTD" id="284391"/>
<dbReference type="DisGeNET" id="284391"/>
<dbReference type="GeneCards" id="ZNF844"/>
<dbReference type="HGNC" id="HGNC:25932">
    <property type="gene designation" value="ZNF844"/>
</dbReference>
<dbReference type="HPA" id="ENSG00000223547">
    <property type="expression patterns" value="Low tissue specificity"/>
</dbReference>
<dbReference type="neXtProt" id="NX_Q08AG5"/>
<dbReference type="OpenTargets" id="ENSG00000223547"/>
<dbReference type="PharmGKB" id="PA162410862"/>
<dbReference type="VEuPathDB" id="HostDB:ENSG00000223547"/>
<dbReference type="eggNOG" id="KOG1721">
    <property type="taxonomic scope" value="Eukaryota"/>
</dbReference>
<dbReference type="GeneTree" id="ENSGT00950000182755"/>
<dbReference type="HOGENOM" id="CLU_002678_61_0_1"/>
<dbReference type="InParanoid" id="Q08AG5"/>
<dbReference type="OMA" id="TANGSCM"/>
<dbReference type="OrthoDB" id="9478841at2759"/>
<dbReference type="PAN-GO" id="Q08AG5">
    <property type="GO annotations" value="4 GO annotations based on evolutionary models"/>
</dbReference>
<dbReference type="PhylomeDB" id="Q08AG5"/>
<dbReference type="TreeFam" id="TF338854"/>
<dbReference type="PathwayCommons" id="Q08AG5"/>
<dbReference type="SignaLink" id="Q08AG5"/>
<dbReference type="BioGRID-ORCS" id="284391">
    <property type="hits" value="22 hits in 1168 CRISPR screens"/>
</dbReference>
<dbReference type="ChiTaRS" id="ZNF844">
    <property type="organism name" value="human"/>
</dbReference>
<dbReference type="GenomeRNAi" id="284391"/>
<dbReference type="Pharos" id="Q08AG5">
    <property type="development level" value="Tdark"/>
</dbReference>
<dbReference type="PRO" id="PR:Q08AG5"/>
<dbReference type="Proteomes" id="UP000005640">
    <property type="component" value="Chromosome 19"/>
</dbReference>
<dbReference type="RNAct" id="Q08AG5">
    <property type="molecule type" value="protein"/>
</dbReference>
<dbReference type="Bgee" id="ENSG00000223547">
    <property type="expression patterns" value="Expressed in kidney epithelium and 177 other cell types or tissues"/>
</dbReference>
<dbReference type="ExpressionAtlas" id="Q08AG5">
    <property type="expression patterns" value="baseline and differential"/>
</dbReference>
<dbReference type="GO" id="GO:0005634">
    <property type="term" value="C:nucleus"/>
    <property type="evidence" value="ECO:0000318"/>
    <property type="project" value="GO_Central"/>
</dbReference>
<dbReference type="GO" id="GO:0000981">
    <property type="term" value="F:DNA-binding transcription factor activity, RNA polymerase II-specific"/>
    <property type="evidence" value="ECO:0000318"/>
    <property type="project" value="GO_Central"/>
</dbReference>
<dbReference type="GO" id="GO:0000977">
    <property type="term" value="F:RNA polymerase II transcription regulatory region sequence-specific DNA binding"/>
    <property type="evidence" value="ECO:0000318"/>
    <property type="project" value="GO_Central"/>
</dbReference>
<dbReference type="GO" id="GO:0008270">
    <property type="term" value="F:zinc ion binding"/>
    <property type="evidence" value="ECO:0007669"/>
    <property type="project" value="UniProtKB-KW"/>
</dbReference>
<dbReference type="GO" id="GO:0006357">
    <property type="term" value="P:regulation of transcription by RNA polymerase II"/>
    <property type="evidence" value="ECO:0000318"/>
    <property type="project" value="GO_Central"/>
</dbReference>
<dbReference type="CDD" id="cd07765">
    <property type="entry name" value="KRAB_A-box"/>
    <property type="match status" value="1"/>
</dbReference>
<dbReference type="FunFam" id="3.30.160.60:FF:000187">
    <property type="entry name" value="zinc finger protein 37 homolog"/>
    <property type="match status" value="1"/>
</dbReference>
<dbReference type="FunFam" id="3.30.160.60:FF:002254">
    <property type="entry name" value="Zinc finger protein 540"/>
    <property type="match status" value="1"/>
</dbReference>
<dbReference type="FunFam" id="3.30.160.60:FF:000371">
    <property type="entry name" value="Zinc finger protein 555"/>
    <property type="match status" value="1"/>
</dbReference>
<dbReference type="FunFam" id="3.30.160.60:FF:001254">
    <property type="entry name" value="Zinc finger protein 564"/>
    <property type="match status" value="1"/>
</dbReference>
<dbReference type="FunFam" id="3.30.160.60:FF:001239">
    <property type="entry name" value="Zinc finger protein 615"/>
    <property type="match status" value="1"/>
</dbReference>
<dbReference type="FunFam" id="3.30.160.60:FF:000493">
    <property type="entry name" value="Zinc finger protein 805"/>
    <property type="match status" value="1"/>
</dbReference>
<dbReference type="Gene3D" id="6.10.140.140">
    <property type="match status" value="1"/>
</dbReference>
<dbReference type="Gene3D" id="3.30.160.60">
    <property type="entry name" value="Classic Zinc Finger"/>
    <property type="match status" value="8"/>
</dbReference>
<dbReference type="InterPro" id="IPR001909">
    <property type="entry name" value="KRAB"/>
</dbReference>
<dbReference type="InterPro" id="IPR036051">
    <property type="entry name" value="KRAB_dom_sf"/>
</dbReference>
<dbReference type="InterPro" id="IPR050758">
    <property type="entry name" value="Znf_C2H2-type"/>
</dbReference>
<dbReference type="InterPro" id="IPR036236">
    <property type="entry name" value="Znf_C2H2_sf"/>
</dbReference>
<dbReference type="InterPro" id="IPR013087">
    <property type="entry name" value="Znf_C2H2_type"/>
</dbReference>
<dbReference type="PANTHER" id="PTHR23234:SF10">
    <property type="entry name" value="RIKEN CDNA 6720489N17 GENE-RELATED"/>
    <property type="match status" value="1"/>
</dbReference>
<dbReference type="PANTHER" id="PTHR23234">
    <property type="entry name" value="ZNF44 PROTEIN"/>
    <property type="match status" value="1"/>
</dbReference>
<dbReference type="Pfam" id="PF01352">
    <property type="entry name" value="KRAB"/>
    <property type="match status" value="1"/>
</dbReference>
<dbReference type="Pfam" id="PF00096">
    <property type="entry name" value="zf-C2H2"/>
    <property type="match status" value="2"/>
</dbReference>
<dbReference type="Pfam" id="PF13912">
    <property type="entry name" value="zf-C2H2_6"/>
    <property type="match status" value="1"/>
</dbReference>
<dbReference type="SMART" id="SM00349">
    <property type="entry name" value="KRAB"/>
    <property type="match status" value="1"/>
</dbReference>
<dbReference type="SMART" id="SM00355">
    <property type="entry name" value="ZnF_C2H2"/>
    <property type="match status" value="8"/>
</dbReference>
<dbReference type="SUPFAM" id="SSF57667">
    <property type="entry name" value="beta-beta-alpha zinc fingers"/>
    <property type="match status" value="5"/>
</dbReference>
<dbReference type="SUPFAM" id="SSF109640">
    <property type="entry name" value="KRAB domain (Kruppel-associated box)"/>
    <property type="match status" value="1"/>
</dbReference>
<dbReference type="PROSITE" id="PS50805">
    <property type="entry name" value="KRAB"/>
    <property type="match status" value="1"/>
</dbReference>
<dbReference type="PROSITE" id="PS00028">
    <property type="entry name" value="ZINC_FINGER_C2H2_1"/>
    <property type="match status" value="6"/>
</dbReference>
<dbReference type="PROSITE" id="PS50157">
    <property type="entry name" value="ZINC_FINGER_C2H2_2"/>
    <property type="match status" value="8"/>
</dbReference>
<gene>
    <name type="primary">ZNF844</name>
</gene>
<protein>
    <recommendedName>
        <fullName>Zinc finger protein 844</fullName>
    </recommendedName>
</protein>
<comment type="function">
    <text evidence="1">May be involved in transcriptional regulation.</text>
</comment>
<comment type="interaction">
    <interactant intactId="EBI-10225757">
        <id>Q08AG5</id>
    </interactant>
    <interactant intactId="EBI-10311131">
        <id>Q9NP86</id>
        <label>CABP5</label>
    </interactant>
    <organismsDiffer>false</organismsDiffer>
    <experiments>3</experiments>
</comment>
<comment type="interaction">
    <interactant intactId="EBI-10225757">
        <id>Q08AG5</id>
    </interactant>
    <interactant intactId="EBI-5916454">
        <id>A6NEM1</id>
        <label>GOLGA6L9</label>
    </interactant>
    <organismsDiffer>false</organismsDiffer>
    <experiments>3</experiments>
</comment>
<comment type="interaction">
    <interactant intactId="EBI-10225757">
        <id>Q08AG5</id>
    </interactant>
    <interactant intactId="EBI-10961706">
        <id>Q96ED9-2</id>
        <label>HOOK2</label>
    </interactant>
    <organismsDiffer>false</organismsDiffer>
    <experiments>3</experiments>
</comment>
<comment type="interaction">
    <interactant intactId="EBI-10225757">
        <id>Q08AG5</id>
    </interactant>
    <interactant intactId="EBI-7116203">
        <id>O75031</id>
        <label>HSF2BP</label>
    </interactant>
    <organismsDiffer>false</organismsDiffer>
    <experiments>3</experiments>
</comment>
<comment type="interaction">
    <interactant intactId="EBI-10225757">
        <id>Q08AG5</id>
    </interactant>
    <interactant intactId="EBI-10171697">
        <id>Q6A162</id>
        <label>KRT40</label>
    </interactant>
    <organismsDiffer>false</organismsDiffer>
    <experiments>6</experiments>
</comment>
<comment type="interaction">
    <interactant intactId="EBI-10225757">
        <id>Q08AG5</id>
    </interactant>
    <interactant intactId="EBI-10172290">
        <id>P60409</id>
        <label>KRTAP10-7</label>
    </interactant>
    <organismsDiffer>false</organismsDiffer>
    <experiments>3</experiments>
</comment>
<comment type="interaction">
    <interactant intactId="EBI-10225757">
        <id>Q08AG5</id>
    </interactant>
    <interactant intactId="EBI-10172052">
        <id>P60411</id>
        <label>KRTAP10-9</label>
    </interactant>
    <organismsDiffer>false</organismsDiffer>
    <experiments>3</experiments>
</comment>
<comment type="interaction">
    <interactant intactId="EBI-10225757">
        <id>Q08AG5</id>
    </interactant>
    <interactant intactId="EBI-724076">
        <id>Q99750</id>
        <label>MDFI</label>
    </interactant>
    <organismsDiffer>false</organismsDiffer>
    <experiments>6</experiments>
</comment>
<comment type="interaction">
    <interactant intactId="EBI-10225757">
        <id>Q08AG5</id>
    </interactant>
    <interactant intactId="EBI-6165891">
        <id>Q14696</id>
        <label>MESD</label>
    </interactant>
    <organismsDiffer>false</organismsDiffer>
    <experiments>3</experiments>
</comment>
<comment type="interaction">
    <interactant intactId="EBI-10225757">
        <id>Q08AG5</id>
    </interactant>
    <interactant intactId="EBI-742948">
        <id>Q5JR59</id>
        <label>MTUS2</label>
    </interactant>
    <organismsDiffer>false</organismsDiffer>
    <experiments>3</experiments>
</comment>
<comment type="interaction">
    <interactant intactId="EBI-10225757">
        <id>Q08AG5</id>
    </interactant>
    <interactant intactId="EBI-928842">
        <id>Q9GZM8</id>
        <label>NDEL1</label>
    </interactant>
    <organismsDiffer>false</organismsDiffer>
    <experiments>6</experiments>
</comment>
<comment type="interaction">
    <interactant intactId="EBI-10225757">
        <id>Q08AG5</id>
    </interactant>
    <interactant intactId="EBI-359224">
        <id>Q13077</id>
        <label>TRAF1</label>
    </interactant>
    <organismsDiffer>false</organismsDiffer>
    <experiments>3</experiments>
</comment>
<comment type="subcellular location">
    <subcellularLocation>
        <location evidence="1">Nucleus</location>
    </subcellularLocation>
</comment>
<comment type="similarity">
    <text evidence="5">Belongs to the krueppel C2H2-type zinc-finger protein family.</text>
</comment>
<feature type="chain" id="PRO_0000349877" description="Zinc finger protein 844">
    <location>
        <begin position="1"/>
        <end position="666"/>
    </location>
</feature>
<feature type="domain" description="KRAB" evidence="3">
    <location>
        <begin position="4"/>
        <end position="86"/>
    </location>
</feature>
<feature type="zinc finger region" description="C2H2-type 1; degenerate" evidence="2">
    <location>
        <begin position="101"/>
        <end position="125"/>
    </location>
</feature>
<feature type="zinc finger region" description="C2H2-type 2; degenerate" evidence="2">
    <location>
        <begin position="141"/>
        <end position="163"/>
    </location>
</feature>
<feature type="zinc finger region" description="C2H2-type 3" evidence="2">
    <location>
        <begin position="169"/>
        <end position="191"/>
    </location>
</feature>
<feature type="zinc finger region" description="C2H2-type 4" evidence="2">
    <location>
        <begin position="197"/>
        <end position="219"/>
    </location>
</feature>
<feature type="zinc finger region" description="C2H2-type 5" evidence="2">
    <location>
        <begin position="225"/>
        <end position="247"/>
    </location>
</feature>
<feature type="zinc finger region" description="C2H2-type 6" evidence="2">
    <location>
        <begin position="253"/>
        <end position="275"/>
    </location>
</feature>
<feature type="zinc finger region" description="C2H2-type 7" evidence="2">
    <location>
        <begin position="281"/>
        <end position="303"/>
    </location>
</feature>
<feature type="zinc finger region" description="C2H2-type 8" evidence="2">
    <location>
        <begin position="309"/>
        <end position="331"/>
    </location>
</feature>
<feature type="zinc finger region" description="C2H2-type 9" evidence="2">
    <location>
        <begin position="337"/>
        <end position="358"/>
    </location>
</feature>
<feature type="region of interest" description="Disordered" evidence="4">
    <location>
        <begin position="73"/>
        <end position="101"/>
    </location>
</feature>
<feature type="sequence variant" id="VAR_059941" description="In dbSNP:rs12611158.">
    <original>V</original>
    <variation>M</variation>
    <location>
        <position position="113"/>
    </location>
</feature>
<feature type="sequence variant" id="VAR_059942" description="In dbSNP:rs10422576.">
    <original>R</original>
    <variation>H</variation>
    <location>
        <position position="146"/>
    </location>
</feature>
<feature type="sequence variant" id="VAR_059943" description="In dbSNP:rs7259684.">
    <original>K</original>
    <variation>E</variation>
    <location>
        <position position="226"/>
    </location>
</feature>
<feature type="sequence variant" id="VAR_059944" description="In dbSNP:rs7259845.">
    <original>T</original>
    <variation>A</variation>
    <location>
        <position position="276"/>
    </location>
</feature>
<feature type="sequence variant" id="VAR_059945" description="In dbSNP:rs6511763.">
    <original>A</original>
    <variation>P</variation>
    <location>
        <position position="308"/>
    </location>
</feature>
<feature type="sequence variant" id="VAR_059946" description="In dbSNP:rs8102258.">
    <original>V</original>
    <variation>A</variation>
    <location>
        <position position="329"/>
    </location>
</feature>
<feature type="sequence variant" id="VAR_059947" description="In dbSNP:rs1438694.">
    <original>M</original>
    <variation>L</variation>
    <location>
        <position position="584"/>
    </location>
</feature>
<feature type="sequence variant" id="VAR_059948" description="In dbSNP:rs10426017.">
    <original>I</original>
    <variation>M</variation>
    <location>
        <position position="642"/>
    </location>
</feature>
<feature type="sequence variant" id="VAR_061980" description="In dbSNP:rs55703333.">
    <original>V</original>
    <variation>I</variation>
    <location>
        <position position="658"/>
    </location>
</feature>
<feature type="sequence conflict" description="In Ref. 2; CAI46141." evidence="5" ref="2">
    <original>T</original>
    <variation>A</variation>
    <location>
        <position position="177"/>
    </location>
</feature>
<accession>Q08AG5</accession>
<accession>Q5JPI8</accession>